<organism>
    <name type="scientific">Cricetomys emini</name>
    <name type="common">Emin's giant pouched rat</name>
    <dbReference type="NCBI Taxonomy" id="107265"/>
    <lineage>
        <taxon>Eukaryota</taxon>
        <taxon>Metazoa</taxon>
        <taxon>Chordata</taxon>
        <taxon>Craniata</taxon>
        <taxon>Vertebrata</taxon>
        <taxon>Euteleostomi</taxon>
        <taxon>Mammalia</taxon>
        <taxon>Eutheria</taxon>
        <taxon>Euarchontoglires</taxon>
        <taxon>Glires</taxon>
        <taxon>Rodentia</taxon>
        <taxon>Myomorpha</taxon>
        <taxon>Muroidea</taxon>
        <taxon>Nesomyidae</taxon>
        <taxon>Cricetomyinae</taxon>
        <taxon>Cricetomys</taxon>
    </lineage>
</organism>
<name>CYB_CRIEM</name>
<evidence type="ECO:0000250" key="1"/>
<evidence type="ECO:0000250" key="2">
    <source>
        <dbReference type="UniProtKB" id="P00157"/>
    </source>
</evidence>
<evidence type="ECO:0000255" key="3">
    <source>
        <dbReference type="PROSITE-ProRule" id="PRU00967"/>
    </source>
</evidence>
<evidence type="ECO:0000255" key="4">
    <source>
        <dbReference type="PROSITE-ProRule" id="PRU00968"/>
    </source>
</evidence>
<proteinExistence type="inferred from homology"/>
<reference key="1">
    <citation type="journal article" date="1999" name="Cladistics">
        <title>Molecular phylogeny and biogeography of Madagascar's native rodents (Muridae: Nesomyinae): a test of the single origin hypothesis.</title>
        <authorList>
            <person name="Jansa S.A."/>
            <person name="Goodman S.M."/>
            <person name="Tucker P.K."/>
        </authorList>
    </citation>
    <scope>NUCLEOTIDE SEQUENCE [GENOMIC DNA]</scope>
    <source>
        <strain>Isolate Cemi530</strain>
    </source>
</reference>
<dbReference type="EMBL" id="AF160612">
    <property type="protein sequence ID" value="AAF15228.1"/>
    <property type="molecule type" value="Genomic_DNA"/>
</dbReference>
<dbReference type="SMR" id="Q9T7N2"/>
<dbReference type="GO" id="GO:0005743">
    <property type="term" value="C:mitochondrial inner membrane"/>
    <property type="evidence" value="ECO:0007669"/>
    <property type="project" value="UniProtKB-SubCell"/>
</dbReference>
<dbReference type="GO" id="GO:0045275">
    <property type="term" value="C:respiratory chain complex III"/>
    <property type="evidence" value="ECO:0007669"/>
    <property type="project" value="InterPro"/>
</dbReference>
<dbReference type="GO" id="GO:0046872">
    <property type="term" value="F:metal ion binding"/>
    <property type="evidence" value="ECO:0007669"/>
    <property type="project" value="UniProtKB-KW"/>
</dbReference>
<dbReference type="GO" id="GO:0008121">
    <property type="term" value="F:ubiquinol-cytochrome-c reductase activity"/>
    <property type="evidence" value="ECO:0007669"/>
    <property type="project" value="InterPro"/>
</dbReference>
<dbReference type="GO" id="GO:0006122">
    <property type="term" value="P:mitochondrial electron transport, ubiquinol to cytochrome c"/>
    <property type="evidence" value="ECO:0007669"/>
    <property type="project" value="TreeGrafter"/>
</dbReference>
<dbReference type="CDD" id="cd00290">
    <property type="entry name" value="cytochrome_b_C"/>
    <property type="match status" value="1"/>
</dbReference>
<dbReference type="CDD" id="cd00284">
    <property type="entry name" value="Cytochrome_b_N"/>
    <property type="match status" value="1"/>
</dbReference>
<dbReference type="FunFam" id="1.20.810.10:FF:000002">
    <property type="entry name" value="Cytochrome b"/>
    <property type="match status" value="1"/>
</dbReference>
<dbReference type="Gene3D" id="1.20.810.10">
    <property type="entry name" value="Cytochrome Bc1 Complex, Chain C"/>
    <property type="match status" value="1"/>
</dbReference>
<dbReference type="InterPro" id="IPR005798">
    <property type="entry name" value="Cyt_b/b6_C"/>
</dbReference>
<dbReference type="InterPro" id="IPR036150">
    <property type="entry name" value="Cyt_b/b6_C_sf"/>
</dbReference>
<dbReference type="InterPro" id="IPR005797">
    <property type="entry name" value="Cyt_b/b6_N"/>
</dbReference>
<dbReference type="InterPro" id="IPR027387">
    <property type="entry name" value="Cytb/b6-like_sf"/>
</dbReference>
<dbReference type="InterPro" id="IPR030689">
    <property type="entry name" value="Cytochrome_b"/>
</dbReference>
<dbReference type="InterPro" id="IPR048260">
    <property type="entry name" value="Cytochrome_b_C_euk/bac"/>
</dbReference>
<dbReference type="InterPro" id="IPR048259">
    <property type="entry name" value="Cytochrome_b_N_euk/bac"/>
</dbReference>
<dbReference type="InterPro" id="IPR016174">
    <property type="entry name" value="Di-haem_cyt_TM"/>
</dbReference>
<dbReference type="PANTHER" id="PTHR19271">
    <property type="entry name" value="CYTOCHROME B"/>
    <property type="match status" value="1"/>
</dbReference>
<dbReference type="PANTHER" id="PTHR19271:SF16">
    <property type="entry name" value="CYTOCHROME B"/>
    <property type="match status" value="1"/>
</dbReference>
<dbReference type="Pfam" id="PF00032">
    <property type="entry name" value="Cytochrom_B_C"/>
    <property type="match status" value="1"/>
</dbReference>
<dbReference type="Pfam" id="PF00033">
    <property type="entry name" value="Cytochrome_B"/>
    <property type="match status" value="1"/>
</dbReference>
<dbReference type="PIRSF" id="PIRSF038885">
    <property type="entry name" value="COB"/>
    <property type="match status" value="1"/>
</dbReference>
<dbReference type="SUPFAM" id="SSF81648">
    <property type="entry name" value="a domain/subunit of cytochrome bc1 complex (Ubiquinol-cytochrome c reductase)"/>
    <property type="match status" value="1"/>
</dbReference>
<dbReference type="SUPFAM" id="SSF81342">
    <property type="entry name" value="Transmembrane di-heme cytochromes"/>
    <property type="match status" value="1"/>
</dbReference>
<dbReference type="PROSITE" id="PS51003">
    <property type="entry name" value="CYTB_CTER"/>
    <property type="match status" value="1"/>
</dbReference>
<dbReference type="PROSITE" id="PS51002">
    <property type="entry name" value="CYTB_NTER"/>
    <property type="match status" value="1"/>
</dbReference>
<protein>
    <recommendedName>
        <fullName>Cytochrome b</fullName>
    </recommendedName>
    <alternativeName>
        <fullName>Complex III subunit 3</fullName>
    </alternativeName>
    <alternativeName>
        <fullName>Complex III subunit III</fullName>
    </alternativeName>
    <alternativeName>
        <fullName>Cytochrome b-c1 complex subunit 3</fullName>
    </alternativeName>
    <alternativeName>
        <fullName>Ubiquinol-cytochrome-c reductase complex cytochrome b subunit</fullName>
    </alternativeName>
</protein>
<keyword id="KW-0249">Electron transport</keyword>
<keyword id="KW-0349">Heme</keyword>
<keyword id="KW-0408">Iron</keyword>
<keyword id="KW-0472">Membrane</keyword>
<keyword id="KW-0479">Metal-binding</keyword>
<keyword id="KW-0496">Mitochondrion</keyword>
<keyword id="KW-0999">Mitochondrion inner membrane</keyword>
<keyword id="KW-0679">Respiratory chain</keyword>
<keyword id="KW-0812">Transmembrane</keyword>
<keyword id="KW-1133">Transmembrane helix</keyword>
<keyword id="KW-0813">Transport</keyword>
<keyword id="KW-0830">Ubiquinone</keyword>
<accession>Q9T7N2</accession>
<sequence>MTNIRKTHPLMKIINHSFIDLPTPSNISSWWNFGSLLGICLVLQILTGLFLAMHYTSDTTTAFSSVTHICRDVNYGWFIRYLHANGASMFFICLYIHVGRGIYYGSFTSMETWNVGIILLFTVMATAFMGYVLPWGQMSFWGATVITNLLSAIPYIGTTLVEWIWGGFSVDKPTLTRFFAFHFILPFIIVALVMVHLLFLHETGSNNPTGLNSNADKIPFHPYYTTKDILGVLLLILFLISLVLFAPDLLGDPDNYTPANPLITPPHIKPEWYFLFAYAILRSIPNKLGGVLALITSILTLTLLPYLYTSKLRSLMFRPLTQLCYWMLVSDIMILTWIGAQPVEYPFITIGQVASILYFTIIIILMPMSTMLEDKMLNWN</sequence>
<feature type="chain" id="PRO_0000060823" description="Cytochrome b">
    <location>
        <begin position="1"/>
        <end position="380"/>
    </location>
</feature>
<feature type="transmembrane region" description="Helical" evidence="2">
    <location>
        <begin position="33"/>
        <end position="53"/>
    </location>
</feature>
<feature type="transmembrane region" description="Helical" evidence="2">
    <location>
        <begin position="77"/>
        <end position="98"/>
    </location>
</feature>
<feature type="transmembrane region" description="Helical" evidence="2">
    <location>
        <begin position="113"/>
        <end position="133"/>
    </location>
</feature>
<feature type="transmembrane region" description="Helical" evidence="2">
    <location>
        <begin position="178"/>
        <end position="198"/>
    </location>
</feature>
<feature type="transmembrane region" description="Helical" evidence="2">
    <location>
        <begin position="226"/>
        <end position="246"/>
    </location>
</feature>
<feature type="transmembrane region" description="Helical" evidence="2">
    <location>
        <begin position="288"/>
        <end position="308"/>
    </location>
</feature>
<feature type="transmembrane region" description="Helical" evidence="2">
    <location>
        <begin position="320"/>
        <end position="340"/>
    </location>
</feature>
<feature type="transmembrane region" description="Helical" evidence="2">
    <location>
        <begin position="347"/>
        <end position="367"/>
    </location>
</feature>
<feature type="binding site" description="axial binding residue" evidence="2">
    <location>
        <position position="83"/>
    </location>
    <ligand>
        <name>heme b</name>
        <dbReference type="ChEBI" id="CHEBI:60344"/>
        <label>b562</label>
    </ligand>
    <ligandPart>
        <name>Fe</name>
        <dbReference type="ChEBI" id="CHEBI:18248"/>
    </ligandPart>
</feature>
<feature type="binding site" description="axial binding residue" evidence="2">
    <location>
        <position position="97"/>
    </location>
    <ligand>
        <name>heme b</name>
        <dbReference type="ChEBI" id="CHEBI:60344"/>
        <label>b566</label>
    </ligand>
    <ligandPart>
        <name>Fe</name>
        <dbReference type="ChEBI" id="CHEBI:18248"/>
    </ligandPart>
</feature>
<feature type="binding site" description="axial binding residue" evidence="2">
    <location>
        <position position="182"/>
    </location>
    <ligand>
        <name>heme b</name>
        <dbReference type="ChEBI" id="CHEBI:60344"/>
        <label>b562</label>
    </ligand>
    <ligandPart>
        <name>Fe</name>
        <dbReference type="ChEBI" id="CHEBI:18248"/>
    </ligandPart>
</feature>
<feature type="binding site" description="axial binding residue" evidence="2">
    <location>
        <position position="196"/>
    </location>
    <ligand>
        <name>heme b</name>
        <dbReference type="ChEBI" id="CHEBI:60344"/>
        <label>b566</label>
    </ligand>
    <ligandPart>
        <name>Fe</name>
        <dbReference type="ChEBI" id="CHEBI:18248"/>
    </ligandPart>
</feature>
<feature type="binding site" evidence="2">
    <location>
        <position position="201"/>
    </location>
    <ligand>
        <name>a ubiquinone</name>
        <dbReference type="ChEBI" id="CHEBI:16389"/>
    </ligand>
</feature>
<comment type="function">
    <text evidence="2">Component of the ubiquinol-cytochrome c reductase complex (complex III or cytochrome b-c1 complex) that is part of the mitochondrial respiratory chain. The b-c1 complex mediates electron transfer from ubiquinol to cytochrome c. Contributes to the generation of a proton gradient across the mitochondrial membrane that is then used for ATP synthesis.</text>
</comment>
<comment type="cofactor">
    <cofactor evidence="2">
        <name>heme b</name>
        <dbReference type="ChEBI" id="CHEBI:60344"/>
    </cofactor>
    <text evidence="2">Binds 2 heme b groups non-covalently.</text>
</comment>
<comment type="subunit">
    <text evidence="2">The cytochrome bc1 complex contains 11 subunits: 3 respiratory subunits (MT-CYB, CYC1 and UQCRFS1), 2 core proteins (UQCRC1 and UQCRC2) and 6 low-molecular weight proteins (UQCRH/QCR6, UQCRB/QCR7, UQCRQ/QCR8, UQCR10/QCR9, UQCR11/QCR10 and a cleavage product of UQCRFS1). This cytochrome bc1 complex then forms a dimer.</text>
</comment>
<comment type="subcellular location">
    <subcellularLocation>
        <location evidence="2">Mitochondrion inner membrane</location>
        <topology evidence="2">Multi-pass membrane protein</topology>
    </subcellularLocation>
</comment>
<comment type="miscellaneous">
    <text evidence="1">Heme 1 (or BL or b562) is low-potential and absorbs at about 562 nm, and heme 2 (or BH or b566) is high-potential and absorbs at about 566 nm.</text>
</comment>
<comment type="similarity">
    <text evidence="3 4">Belongs to the cytochrome b family.</text>
</comment>
<comment type="caution">
    <text evidence="2">The full-length protein contains only eight transmembrane helices, not nine as predicted by bioinformatics tools.</text>
</comment>
<geneLocation type="mitochondrion"/>
<gene>
    <name type="primary">MT-CYB</name>
    <name type="synonym">COB</name>
    <name type="synonym">CYTB</name>
    <name type="synonym">MTCYB</name>
</gene>